<sequence>MGNVQTSVNTYNITGDGNSFTPTSDMTSTAAPAIDLKPGVLNPTGKLWRPVGTSVATIDSLAIVSDRFGQYSFVNEGMRETFSKALFDINMWQPLFQATKTGCGPIVLSSFTTTTSGYVGATAGDALDNPVTNGVFISTVQVMNLQRTIAARMRDVALWQQHLDTAMTMLTPDISAGSASCNWKSLLAFAKDILPLDNLCLTYPNEFYNVAIHRYPALKPGNPDTKLPDAQAHPLGEVAGAFNAATSEVGSLVGSSSTLSQAISTMAGKDLDLIEADTPLPVSVFTPSLAPRSYRPAFIKPEDAKWIAEFNNSSLIRKTLTYSGATYAVQLGPGPTRVIDMNAMIDSVLTLDVSGTILPYDTNPDLSTSVPAFVLIQTSVPIQQVTTAANITAITVVSAAGASAINLAINVRGQPRFNMLHLQATFERETITGIPYIYGLGTFLIPSPTSSSNFSNPTLMDGLLTVTPVLLRETTYKGEVVDAIVPATVMANQTSEEVASALANDAIVLVSNHLNKLANVVGDAIPVASKTDDSATSAIVSRLAVQHKLSQVGQTSPTPPDYPLLWRRAKRAASMFVSNPSLALQVGIPVLTQSGMLSALTSGVGTALRTGSLGKGVTDASEKLRARQSLTVAKQAFFDQIGSLWPGK</sequence>
<reference key="1">
    <citation type="journal article" date="2002" name="J. Gen. Virol.">
        <title>Common evolutionary origin of aquareoviruses and orthoreoviruses revealed by genome characterization of Golden shiner reovirus, Grass carp reovirus, Striped bass reovirus and golden ide reovirus (genus Aquareovirus, family Reoviridae).</title>
        <authorList>
            <person name="Attoui H."/>
            <person name="Fang Q."/>
            <person name="Mohd Jaafar F."/>
            <person name="Cantaloube J.F."/>
            <person name="Biagini P."/>
            <person name="de Micco P."/>
            <person name="de Lamballerie X."/>
        </authorList>
    </citation>
    <scope>NUCLEOTIDE SEQUENCE [GENOMIC RNA]</scope>
</reference>
<protein>
    <recommendedName>
        <fullName>Outer capsid protein VP4</fullName>
    </recommendedName>
</protein>
<comment type="function">
    <text evidence="3">Interacts with VP7 to form the outer icosahedral capsid with an incomplete T=13 symmetry, about 80 nm in diameter, and consisting of 200 VP4-VP7 trimers. Myristoylated N-terminal peptide may be released in the endosome and involved in permeabilization and delivery of transcriptionally active viral particles into the host cell cytoplasm (Potential).</text>
</comment>
<comment type="subunit">
    <text evidence="1">Interacts with VP6 and VP7.</text>
</comment>
<comment type="subcellular location">
    <subcellularLocation>
        <location evidence="3">Virion</location>
    </subcellularLocation>
</comment>
<comment type="PTM">
    <text evidence="1">Cleaved during the endosomal proteolytic disassembly of the outer capsid.</text>
</comment>
<comment type="PTM">
    <text evidence="1">N-terminally myristoylated. This acylation is essential for the membrane fusion activity (By similarity).</text>
</comment>
<comment type="similarity">
    <text evidence="3">Belongs to the aquareoviridae outer capsid VP4 protein family.</text>
</comment>
<evidence type="ECO:0000250" key="1"/>
<evidence type="ECO:0000255" key="2"/>
<evidence type="ECO:0000305" key="3"/>
<feature type="initiator methionine" description="Removed" evidence="2">
    <location>
        <position position="1"/>
    </location>
</feature>
<feature type="chain" id="PRO_0000404187" description="Outer capsid protein VP4">
    <location>
        <begin position="2"/>
        <end position="648"/>
    </location>
</feature>
<feature type="site" description="Cleavage" evidence="1">
    <location>
        <begin position="42"/>
        <end position="43"/>
    </location>
</feature>
<feature type="lipid moiety-binding region" description="N-myristoyl glycine; by host" evidence="1">
    <location>
        <position position="2"/>
    </location>
</feature>
<feature type="glycosylation site" description="N-linked (GlcNAc...) asparagine; by host" evidence="2">
    <location>
        <position position="12"/>
    </location>
</feature>
<feature type="glycosylation site" description="N-linked (GlcNAc...) asparagine; by host" evidence="2">
    <location>
        <position position="311"/>
    </location>
</feature>
<feature type="glycosylation site" description="N-linked (GlcNAc...) asparagine; by host" evidence="2">
    <location>
        <position position="312"/>
    </location>
</feature>
<feature type="glycosylation site" description="N-linked (GlcNAc...) asparagine; by host" evidence="2">
    <location>
        <position position="390"/>
    </location>
</feature>
<feature type="glycosylation site" description="N-linked (GlcNAc...) asparagine; by host" evidence="2">
    <location>
        <position position="453"/>
    </location>
</feature>
<feature type="glycosylation site" description="N-linked (GlcNAc...) asparagine; by host" evidence="2">
    <location>
        <position position="492"/>
    </location>
</feature>
<organismHost>
    <name type="scientific">Notemigonus crysoleucas</name>
    <name type="common">Golden shiner</name>
    <name type="synonym">Cyprinus crysoleucas</name>
    <dbReference type="NCBI Taxonomy" id="28800"/>
</organismHost>
<organismHost>
    <name type="scientific">Pimephales promelas</name>
    <name type="common">Fathead minnow</name>
    <dbReference type="NCBI Taxonomy" id="90988"/>
</organismHost>
<accession>Q8JU57</accession>
<gene>
    <name type="primary">S6</name>
</gene>
<dbReference type="EMBL" id="AF403403">
    <property type="protein sequence ID" value="AAM92749.1"/>
    <property type="molecule type" value="Genomic_RNA"/>
</dbReference>
<dbReference type="RefSeq" id="NP_938065.1">
    <property type="nucleotide sequence ID" value="NC_005171.1"/>
</dbReference>
<dbReference type="SMR" id="Q8JU57"/>
<dbReference type="MEROPS" id="N07.002"/>
<dbReference type="GlyCosmos" id="Q8JU57">
    <property type="glycosylation" value="6 sites, No reported glycans"/>
</dbReference>
<dbReference type="KEGG" id="vg:2648334"/>
<dbReference type="Proteomes" id="UP000006713">
    <property type="component" value="Genome"/>
</dbReference>
<dbReference type="GO" id="GO:0039621">
    <property type="term" value="C:T=13 icosahedral viral capsid"/>
    <property type="evidence" value="ECO:0007669"/>
    <property type="project" value="UniProtKB-KW"/>
</dbReference>
<dbReference type="GO" id="GO:0039624">
    <property type="term" value="C:viral outer capsid"/>
    <property type="evidence" value="ECO:0007669"/>
    <property type="project" value="UniProtKB-KW"/>
</dbReference>
<dbReference type="GO" id="GO:0046812">
    <property type="term" value="F:host cell surface binding"/>
    <property type="evidence" value="ECO:0007669"/>
    <property type="project" value="InterPro"/>
</dbReference>
<dbReference type="GO" id="GO:0140267">
    <property type="term" value="P:symbiont entry into host cell via permeabilization of host membrane"/>
    <property type="evidence" value="ECO:0007669"/>
    <property type="project" value="UniProtKB-KW"/>
</dbReference>
<dbReference type="Gene3D" id="2.60.120.420">
    <property type="entry name" value="Membrane penetration protein mu1, Chain B, domain 4"/>
    <property type="match status" value="1"/>
</dbReference>
<dbReference type="Gene3D" id="1.10.2040.10">
    <property type="entry name" value="Protein mu-1, chain B, domain 2"/>
    <property type="match status" value="1"/>
</dbReference>
<dbReference type="Gene3D" id="1.10.2050.10">
    <property type="entry name" value="Protein mu-1, chain B, domain 3"/>
    <property type="match status" value="1"/>
</dbReference>
<dbReference type="InterPro" id="IPR009113">
    <property type="entry name" value="Mu1/VP4"/>
</dbReference>
<dbReference type="InterPro" id="IPR036256">
    <property type="entry name" value="Mu1/VP4_sf"/>
</dbReference>
<dbReference type="InterPro" id="IPR015962">
    <property type="entry name" value="Mu1_membr_pen_domII"/>
</dbReference>
<dbReference type="InterPro" id="IPR044937">
    <property type="entry name" value="Mu1_membr_pen_domIII"/>
</dbReference>
<dbReference type="InterPro" id="IPR015960">
    <property type="entry name" value="Mu1_membr_pen_domIV"/>
</dbReference>
<dbReference type="Pfam" id="PF05993">
    <property type="entry name" value="Reovirus_M2"/>
    <property type="match status" value="1"/>
</dbReference>
<dbReference type="SUPFAM" id="SSF69908">
    <property type="entry name" value="Membrane penetration protein mu1"/>
    <property type="match status" value="1"/>
</dbReference>
<keyword id="KW-0167">Capsid protein</keyword>
<keyword id="KW-0325">Glycoprotein</keyword>
<keyword id="KW-0449">Lipoprotein</keyword>
<keyword id="KW-0519">Myristate</keyword>
<keyword id="KW-1152">Outer capsid protein</keyword>
<keyword id="KW-1185">Reference proteome</keyword>
<keyword id="KW-1146">T=13 icosahedral capsid protein</keyword>
<keyword id="KW-1162">Viral penetration into host cytoplasm</keyword>
<keyword id="KW-1173">Viral penetration via permeabilization of host membrane</keyword>
<keyword id="KW-0946">Virion</keyword>
<keyword id="KW-1160">Virus entry into host cell</keyword>
<proteinExistence type="inferred from homology"/>
<organism>
    <name type="scientific">Aquareovirus C (isolate Golden shiner/USA/GSRV/1977)</name>
    <name type="common">AQRV-C</name>
    <dbReference type="NCBI Taxonomy" id="185783"/>
    <lineage>
        <taxon>Viruses</taxon>
        <taxon>Riboviria</taxon>
        <taxon>Orthornavirae</taxon>
        <taxon>Duplornaviricota</taxon>
        <taxon>Resentoviricetes</taxon>
        <taxon>Reovirales</taxon>
        <taxon>Spinareoviridae</taxon>
        <taxon>Aquareovirus</taxon>
        <taxon>Aquareovirus ctenopharyngodontis</taxon>
    </lineage>
</organism>
<name>VP4_AQRVC</name>